<feature type="chain" id="PRO_1000004195" description="Large ribosomal subunit protein bL33">
    <location>
        <begin position="1"/>
        <end position="55"/>
    </location>
</feature>
<sequence length="55" mass="6372">MAKGIREKIKLVSSAGTGHFYTTTKNKRTKPEKLELKKFDPVVRQHVIYKEAKIK</sequence>
<dbReference type="EMBL" id="CP000038">
    <property type="protein sequence ID" value="AAZ90314.1"/>
    <property type="molecule type" value="Genomic_DNA"/>
</dbReference>
<dbReference type="RefSeq" id="WP_001051798.1">
    <property type="nucleotide sequence ID" value="NC_007384.1"/>
</dbReference>
<dbReference type="SMR" id="Q3YVZ8"/>
<dbReference type="GeneID" id="97607673"/>
<dbReference type="KEGG" id="ssn:SSON_3771"/>
<dbReference type="HOGENOM" id="CLU_190949_1_1_6"/>
<dbReference type="Proteomes" id="UP000002529">
    <property type="component" value="Chromosome"/>
</dbReference>
<dbReference type="GO" id="GO:0022625">
    <property type="term" value="C:cytosolic large ribosomal subunit"/>
    <property type="evidence" value="ECO:0007669"/>
    <property type="project" value="TreeGrafter"/>
</dbReference>
<dbReference type="GO" id="GO:0003735">
    <property type="term" value="F:structural constituent of ribosome"/>
    <property type="evidence" value="ECO:0007669"/>
    <property type="project" value="InterPro"/>
</dbReference>
<dbReference type="GO" id="GO:0006412">
    <property type="term" value="P:translation"/>
    <property type="evidence" value="ECO:0007669"/>
    <property type="project" value="UniProtKB-UniRule"/>
</dbReference>
<dbReference type="FunFam" id="2.20.28.120:FF:000001">
    <property type="entry name" value="50S ribosomal protein L33"/>
    <property type="match status" value="1"/>
</dbReference>
<dbReference type="Gene3D" id="2.20.28.120">
    <property type="entry name" value="Ribosomal protein L33"/>
    <property type="match status" value="1"/>
</dbReference>
<dbReference type="HAMAP" id="MF_00294">
    <property type="entry name" value="Ribosomal_bL33"/>
    <property type="match status" value="1"/>
</dbReference>
<dbReference type="InterPro" id="IPR001705">
    <property type="entry name" value="Ribosomal_bL33"/>
</dbReference>
<dbReference type="InterPro" id="IPR018264">
    <property type="entry name" value="Ribosomal_bL33_CS"/>
</dbReference>
<dbReference type="InterPro" id="IPR038584">
    <property type="entry name" value="Ribosomal_bL33_sf"/>
</dbReference>
<dbReference type="InterPro" id="IPR011332">
    <property type="entry name" value="Ribosomal_zn-bd"/>
</dbReference>
<dbReference type="NCBIfam" id="NF001860">
    <property type="entry name" value="PRK00595.1"/>
    <property type="match status" value="1"/>
</dbReference>
<dbReference type="NCBIfam" id="TIGR01023">
    <property type="entry name" value="rpmG_bact"/>
    <property type="match status" value="1"/>
</dbReference>
<dbReference type="PANTHER" id="PTHR15238">
    <property type="entry name" value="54S RIBOSOMAL PROTEIN L39, MITOCHONDRIAL"/>
    <property type="match status" value="1"/>
</dbReference>
<dbReference type="PANTHER" id="PTHR15238:SF1">
    <property type="entry name" value="LARGE RIBOSOMAL SUBUNIT PROTEIN BL33M"/>
    <property type="match status" value="1"/>
</dbReference>
<dbReference type="Pfam" id="PF00471">
    <property type="entry name" value="Ribosomal_L33"/>
    <property type="match status" value="1"/>
</dbReference>
<dbReference type="SUPFAM" id="SSF57829">
    <property type="entry name" value="Zn-binding ribosomal proteins"/>
    <property type="match status" value="1"/>
</dbReference>
<dbReference type="PROSITE" id="PS00582">
    <property type="entry name" value="RIBOSOMAL_L33"/>
    <property type="match status" value="1"/>
</dbReference>
<evidence type="ECO:0000255" key="1">
    <source>
        <dbReference type="HAMAP-Rule" id="MF_00294"/>
    </source>
</evidence>
<evidence type="ECO:0000305" key="2"/>
<proteinExistence type="inferred from homology"/>
<comment type="similarity">
    <text evidence="1">Belongs to the bacterial ribosomal protein bL33 family.</text>
</comment>
<protein>
    <recommendedName>
        <fullName evidence="1">Large ribosomal subunit protein bL33</fullName>
    </recommendedName>
    <alternativeName>
        <fullName evidence="2">50S ribosomal protein L33</fullName>
    </alternativeName>
</protein>
<keyword id="KW-1185">Reference proteome</keyword>
<keyword id="KW-0687">Ribonucleoprotein</keyword>
<keyword id="KW-0689">Ribosomal protein</keyword>
<organism>
    <name type="scientific">Shigella sonnei (strain Ss046)</name>
    <dbReference type="NCBI Taxonomy" id="300269"/>
    <lineage>
        <taxon>Bacteria</taxon>
        <taxon>Pseudomonadati</taxon>
        <taxon>Pseudomonadota</taxon>
        <taxon>Gammaproteobacteria</taxon>
        <taxon>Enterobacterales</taxon>
        <taxon>Enterobacteriaceae</taxon>
        <taxon>Shigella</taxon>
    </lineage>
</organism>
<name>RL33_SHISS</name>
<reference key="1">
    <citation type="journal article" date="2005" name="Nucleic Acids Res.">
        <title>Genome dynamics and diversity of Shigella species, the etiologic agents of bacillary dysentery.</title>
        <authorList>
            <person name="Yang F."/>
            <person name="Yang J."/>
            <person name="Zhang X."/>
            <person name="Chen L."/>
            <person name="Jiang Y."/>
            <person name="Yan Y."/>
            <person name="Tang X."/>
            <person name="Wang J."/>
            <person name="Xiong Z."/>
            <person name="Dong J."/>
            <person name="Xue Y."/>
            <person name="Zhu Y."/>
            <person name="Xu X."/>
            <person name="Sun L."/>
            <person name="Chen S."/>
            <person name="Nie H."/>
            <person name="Peng J."/>
            <person name="Xu J."/>
            <person name="Wang Y."/>
            <person name="Yuan Z."/>
            <person name="Wen Y."/>
            <person name="Yao Z."/>
            <person name="Shen Y."/>
            <person name="Qiang B."/>
            <person name="Hou Y."/>
            <person name="Yu J."/>
            <person name="Jin Q."/>
        </authorList>
    </citation>
    <scope>NUCLEOTIDE SEQUENCE [LARGE SCALE GENOMIC DNA]</scope>
    <source>
        <strain>Ss046</strain>
    </source>
</reference>
<accession>Q3YVZ8</accession>
<gene>
    <name evidence="1" type="primary">rpmG</name>
    <name type="ordered locus">SSON_3771</name>
</gene>